<organism>
    <name type="scientific">Anaplasma phagocytophilum (strain HZ)</name>
    <dbReference type="NCBI Taxonomy" id="212042"/>
    <lineage>
        <taxon>Bacteria</taxon>
        <taxon>Pseudomonadati</taxon>
        <taxon>Pseudomonadota</taxon>
        <taxon>Alphaproteobacteria</taxon>
        <taxon>Rickettsiales</taxon>
        <taxon>Anaplasmataceae</taxon>
        <taxon>Anaplasma</taxon>
        <taxon>phagocytophilum group</taxon>
    </lineage>
</organism>
<dbReference type="EC" id="2.7.4.9" evidence="1"/>
<dbReference type="EMBL" id="CP000235">
    <property type="protein sequence ID" value="ABD44460.1"/>
    <property type="molecule type" value="Genomic_DNA"/>
</dbReference>
<dbReference type="RefSeq" id="WP_011450247.1">
    <property type="nucleotide sequence ID" value="NC_007797.1"/>
</dbReference>
<dbReference type="SMR" id="Q2GLN0"/>
<dbReference type="STRING" id="212042.APH_0093"/>
<dbReference type="PaxDb" id="212042-APH_0093"/>
<dbReference type="EnsemblBacteria" id="ABD44460">
    <property type="protein sequence ID" value="ABD44460"/>
    <property type="gene ID" value="APH_0093"/>
</dbReference>
<dbReference type="GeneID" id="92747658"/>
<dbReference type="KEGG" id="aph:APH_0093"/>
<dbReference type="eggNOG" id="COG0125">
    <property type="taxonomic scope" value="Bacteria"/>
</dbReference>
<dbReference type="HOGENOM" id="CLU_049131_0_0_5"/>
<dbReference type="Proteomes" id="UP000001943">
    <property type="component" value="Chromosome"/>
</dbReference>
<dbReference type="GO" id="GO:0005829">
    <property type="term" value="C:cytosol"/>
    <property type="evidence" value="ECO:0007669"/>
    <property type="project" value="TreeGrafter"/>
</dbReference>
<dbReference type="GO" id="GO:0005524">
    <property type="term" value="F:ATP binding"/>
    <property type="evidence" value="ECO:0007669"/>
    <property type="project" value="UniProtKB-UniRule"/>
</dbReference>
<dbReference type="GO" id="GO:0004798">
    <property type="term" value="F:dTMP kinase activity"/>
    <property type="evidence" value="ECO:0007669"/>
    <property type="project" value="UniProtKB-UniRule"/>
</dbReference>
<dbReference type="GO" id="GO:0006233">
    <property type="term" value="P:dTDP biosynthetic process"/>
    <property type="evidence" value="ECO:0007669"/>
    <property type="project" value="InterPro"/>
</dbReference>
<dbReference type="GO" id="GO:0006235">
    <property type="term" value="P:dTTP biosynthetic process"/>
    <property type="evidence" value="ECO:0007669"/>
    <property type="project" value="UniProtKB-UniRule"/>
</dbReference>
<dbReference type="GO" id="GO:0006227">
    <property type="term" value="P:dUDP biosynthetic process"/>
    <property type="evidence" value="ECO:0007669"/>
    <property type="project" value="TreeGrafter"/>
</dbReference>
<dbReference type="CDD" id="cd01672">
    <property type="entry name" value="TMPK"/>
    <property type="match status" value="1"/>
</dbReference>
<dbReference type="FunFam" id="3.40.50.300:FF:000225">
    <property type="entry name" value="Thymidylate kinase"/>
    <property type="match status" value="1"/>
</dbReference>
<dbReference type="Gene3D" id="3.40.50.300">
    <property type="entry name" value="P-loop containing nucleotide triphosphate hydrolases"/>
    <property type="match status" value="1"/>
</dbReference>
<dbReference type="HAMAP" id="MF_00165">
    <property type="entry name" value="Thymidylate_kinase"/>
    <property type="match status" value="1"/>
</dbReference>
<dbReference type="InterPro" id="IPR027417">
    <property type="entry name" value="P-loop_NTPase"/>
</dbReference>
<dbReference type="InterPro" id="IPR039430">
    <property type="entry name" value="Thymidylate_kin-like_dom"/>
</dbReference>
<dbReference type="InterPro" id="IPR018095">
    <property type="entry name" value="Thymidylate_kin_CS"/>
</dbReference>
<dbReference type="InterPro" id="IPR018094">
    <property type="entry name" value="Thymidylate_kinase"/>
</dbReference>
<dbReference type="NCBIfam" id="TIGR00041">
    <property type="entry name" value="DTMP_kinase"/>
    <property type="match status" value="1"/>
</dbReference>
<dbReference type="PANTHER" id="PTHR10344">
    <property type="entry name" value="THYMIDYLATE KINASE"/>
    <property type="match status" value="1"/>
</dbReference>
<dbReference type="PANTHER" id="PTHR10344:SF4">
    <property type="entry name" value="UMP-CMP KINASE 2, MITOCHONDRIAL"/>
    <property type="match status" value="1"/>
</dbReference>
<dbReference type="Pfam" id="PF02223">
    <property type="entry name" value="Thymidylate_kin"/>
    <property type="match status" value="1"/>
</dbReference>
<dbReference type="SUPFAM" id="SSF52540">
    <property type="entry name" value="P-loop containing nucleoside triphosphate hydrolases"/>
    <property type="match status" value="1"/>
</dbReference>
<dbReference type="PROSITE" id="PS01331">
    <property type="entry name" value="THYMIDYLATE_KINASE"/>
    <property type="match status" value="1"/>
</dbReference>
<gene>
    <name evidence="1" type="primary">tmk</name>
    <name type="ordered locus">APH_0093</name>
</gene>
<evidence type="ECO:0000255" key="1">
    <source>
        <dbReference type="HAMAP-Rule" id="MF_00165"/>
    </source>
</evidence>
<reference key="1">
    <citation type="journal article" date="2006" name="PLoS Genet.">
        <title>Comparative genomics of emerging human ehrlichiosis agents.</title>
        <authorList>
            <person name="Dunning Hotopp J.C."/>
            <person name="Lin M."/>
            <person name="Madupu R."/>
            <person name="Crabtree J."/>
            <person name="Angiuoli S.V."/>
            <person name="Eisen J.A."/>
            <person name="Seshadri R."/>
            <person name="Ren Q."/>
            <person name="Wu M."/>
            <person name="Utterback T.R."/>
            <person name="Smith S."/>
            <person name="Lewis M."/>
            <person name="Khouri H."/>
            <person name="Zhang C."/>
            <person name="Niu H."/>
            <person name="Lin Q."/>
            <person name="Ohashi N."/>
            <person name="Zhi N."/>
            <person name="Nelson W.C."/>
            <person name="Brinkac L.M."/>
            <person name="Dodson R.J."/>
            <person name="Rosovitz M.J."/>
            <person name="Sundaram J.P."/>
            <person name="Daugherty S.C."/>
            <person name="Davidsen T."/>
            <person name="Durkin A.S."/>
            <person name="Gwinn M.L."/>
            <person name="Haft D.H."/>
            <person name="Selengut J.D."/>
            <person name="Sullivan S.A."/>
            <person name="Zafar N."/>
            <person name="Zhou L."/>
            <person name="Benahmed F."/>
            <person name="Forberger H."/>
            <person name="Halpin R."/>
            <person name="Mulligan S."/>
            <person name="Robinson J."/>
            <person name="White O."/>
            <person name="Rikihisa Y."/>
            <person name="Tettelin H."/>
        </authorList>
    </citation>
    <scope>NUCLEOTIDE SEQUENCE [LARGE SCALE GENOMIC DNA]</scope>
    <source>
        <strain>HZ</strain>
    </source>
</reference>
<keyword id="KW-0067">ATP-binding</keyword>
<keyword id="KW-0418">Kinase</keyword>
<keyword id="KW-0545">Nucleotide biosynthesis</keyword>
<keyword id="KW-0547">Nucleotide-binding</keyword>
<keyword id="KW-0808">Transferase</keyword>
<comment type="function">
    <text evidence="1">Phosphorylation of dTMP to form dTDP in both de novo and salvage pathways of dTTP synthesis.</text>
</comment>
<comment type="catalytic activity">
    <reaction evidence="1">
        <text>dTMP + ATP = dTDP + ADP</text>
        <dbReference type="Rhea" id="RHEA:13517"/>
        <dbReference type="ChEBI" id="CHEBI:30616"/>
        <dbReference type="ChEBI" id="CHEBI:58369"/>
        <dbReference type="ChEBI" id="CHEBI:63528"/>
        <dbReference type="ChEBI" id="CHEBI:456216"/>
        <dbReference type="EC" id="2.7.4.9"/>
    </reaction>
</comment>
<comment type="similarity">
    <text evidence="1">Belongs to the thymidylate kinase family.</text>
</comment>
<feature type="chain" id="PRO_1000023143" description="Thymidylate kinase">
    <location>
        <begin position="1"/>
        <end position="219"/>
    </location>
</feature>
<feature type="binding site" evidence="1">
    <location>
        <begin position="7"/>
        <end position="14"/>
    </location>
    <ligand>
        <name>ATP</name>
        <dbReference type="ChEBI" id="CHEBI:30616"/>
    </ligand>
</feature>
<protein>
    <recommendedName>
        <fullName evidence="1">Thymidylate kinase</fullName>
        <ecNumber evidence="1">2.7.4.9</ecNumber>
    </recommendedName>
    <alternativeName>
        <fullName evidence="1">dTMP kinase</fullName>
    </alternativeName>
</protein>
<accession>Q2GLN0</accession>
<sequence>MFITFEGIDGCGKTTQSILLAKYMSDLYGEDNVVLTREPGGTSFNELLRSVFLSVSDYKVDKLTELFLFLAMRRESFVKVVESALRANKIVISDRCVDSTVAYQGYGCGIDLDLIYKLNSLVMGIVPDMTFIIDIDIEKALSRATRNGYESNSMDFYHKVRKGFQRIAEEEKHRCVLLRCDDYEENGICDVYSVHNKIVGLLQGVLHNKMDAASSSVKV</sequence>
<proteinExistence type="inferred from homology"/>
<name>KTHY_ANAPZ</name>